<organism>
    <name type="scientific">Nitratidesulfovibrio vulgaris (strain DP4)</name>
    <name type="common">Desulfovibrio vulgaris</name>
    <dbReference type="NCBI Taxonomy" id="391774"/>
    <lineage>
        <taxon>Bacteria</taxon>
        <taxon>Pseudomonadati</taxon>
        <taxon>Thermodesulfobacteriota</taxon>
        <taxon>Desulfovibrionia</taxon>
        <taxon>Desulfovibrionales</taxon>
        <taxon>Desulfovibrionaceae</taxon>
        <taxon>Nitratidesulfovibrio</taxon>
    </lineage>
</organism>
<proteinExistence type="inferred from homology"/>
<keyword id="KW-0963">Cytoplasm</keyword>
<keyword id="KW-0396">Initiation factor</keyword>
<keyword id="KW-0648">Protein biosynthesis</keyword>
<keyword id="KW-0694">RNA-binding</keyword>
<keyword id="KW-0699">rRNA-binding</keyword>
<accession>A1VHP4</accession>
<gene>
    <name evidence="1" type="primary">infA2</name>
    <name type="ordered locus">Dvul_2949</name>
</gene>
<feature type="chain" id="PRO_0000338816" description="Translation initiation factor IF-1 2">
    <location>
        <begin position="1"/>
        <end position="72"/>
    </location>
</feature>
<feature type="domain" description="S1-like" evidence="1">
    <location>
        <begin position="1"/>
        <end position="72"/>
    </location>
</feature>
<comment type="function">
    <text evidence="1">One of the essential components for the initiation of protein synthesis. Stabilizes the binding of IF-2 and IF-3 on the 30S subunit to which N-formylmethionyl-tRNA(fMet) subsequently binds. Helps modulate mRNA selection, yielding the 30S pre-initiation complex (PIC). Upon addition of the 50S ribosomal subunit IF-1, IF-2 and IF-3 are released leaving the mature 70S translation initiation complex.</text>
</comment>
<comment type="subunit">
    <text evidence="1">Component of the 30S ribosomal translation pre-initiation complex which assembles on the 30S ribosome in the order IF-2 and IF-3, IF-1 and N-formylmethionyl-tRNA(fMet); mRNA recruitment can occur at any time during PIC assembly.</text>
</comment>
<comment type="subcellular location">
    <subcellularLocation>
        <location evidence="1">Cytoplasm</location>
    </subcellularLocation>
</comment>
<comment type="similarity">
    <text evidence="1">Belongs to the IF-1 family.</text>
</comment>
<evidence type="ECO:0000255" key="1">
    <source>
        <dbReference type="HAMAP-Rule" id="MF_00075"/>
    </source>
</evidence>
<dbReference type="EMBL" id="CP000527">
    <property type="protein sequence ID" value="ABM29960.1"/>
    <property type="molecule type" value="Genomic_DNA"/>
</dbReference>
<dbReference type="SMR" id="A1VHP4"/>
<dbReference type="KEGG" id="dvl:Dvul_2949"/>
<dbReference type="HOGENOM" id="CLU_151267_1_0_7"/>
<dbReference type="Proteomes" id="UP000009173">
    <property type="component" value="Chromosome"/>
</dbReference>
<dbReference type="GO" id="GO:0005829">
    <property type="term" value="C:cytosol"/>
    <property type="evidence" value="ECO:0007669"/>
    <property type="project" value="TreeGrafter"/>
</dbReference>
<dbReference type="GO" id="GO:0043022">
    <property type="term" value="F:ribosome binding"/>
    <property type="evidence" value="ECO:0007669"/>
    <property type="project" value="UniProtKB-UniRule"/>
</dbReference>
<dbReference type="GO" id="GO:0019843">
    <property type="term" value="F:rRNA binding"/>
    <property type="evidence" value="ECO:0007669"/>
    <property type="project" value="UniProtKB-UniRule"/>
</dbReference>
<dbReference type="GO" id="GO:0003743">
    <property type="term" value="F:translation initiation factor activity"/>
    <property type="evidence" value="ECO:0007669"/>
    <property type="project" value="UniProtKB-UniRule"/>
</dbReference>
<dbReference type="CDD" id="cd04451">
    <property type="entry name" value="S1_IF1"/>
    <property type="match status" value="1"/>
</dbReference>
<dbReference type="FunFam" id="2.40.50.140:FF:000002">
    <property type="entry name" value="Translation initiation factor IF-1"/>
    <property type="match status" value="1"/>
</dbReference>
<dbReference type="Gene3D" id="2.40.50.140">
    <property type="entry name" value="Nucleic acid-binding proteins"/>
    <property type="match status" value="1"/>
</dbReference>
<dbReference type="HAMAP" id="MF_00075">
    <property type="entry name" value="IF_1"/>
    <property type="match status" value="1"/>
</dbReference>
<dbReference type="InterPro" id="IPR012340">
    <property type="entry name" value="NA-bd_OB-fold"/>
</dbReference>
<dbReference type="InterPro" id="IPR006196">
    <property type="entry name" value="RNA-binding_domain_S1_IF1"/>
</dbReference>
<dbReference type="InterPro" id="IPR003029">
    <property type="entry name" value="S1_domain"/>
</dbReference>
<dbReference type="InterPro" id="IPR004368">
    <property type="entry name" value="TIF_IF1"/>
</dbReference>
<dbReference type="NCBIfam" id="TIGR00008">
    <property type="entry name" value="infA"/>
    <property type="match status" value="1"/>
</dbReference>
<dbReference type="PANTHER" id="PTHR33370">
    <property type="entry name" value="TRANSLATION INITIATION FACTOR IF-1, CHLOROPLASTIC"/>
    <property type="match status" value="1"/>
</dbReference>
<dbReference type="PANTHER" id="PTHR33370:SF1">
    <property type="entry name" value="TRANSLATION INITIATION FACTOR IF-1, CHLOROPLASTIC"/>
    <property type="match status" value="1"/>
</dbReference>
<dbReference type="Pfam" id="PF01176">
    <property type="entry name" value="eIF-1a"/>
    <property type="match status" value="1"/>
</dbReference>
<dbReference type="SMART" id="SM00316">
    <property type="entry name" value="S1"/>
    <property type="match status" value="1"/>
</dbReference>
<dbReference type="SUPFAM" id="SSF50249">
    <property type="entry name" value="Nucleic acid-binding proteins"/>
    <property type="match status" value="1"/>
</dbReference>
<dbReference type="PROSITE" id="PS50832">
    <property type="entry name" value="S1_IF1_TYPE"/>
    <property type="match status" value="1"/>
</dbReference>
<reference key="1">
    <citation type="journal article" date="2009" name="Environ. Microbiol.">
        <title>Contribution of mobile genetic elements to Desulfovibrio vulgaris genome plasticity.</title>
        <authorList>
            <person name="Walker C.B."/>
            <person name="Stolyar S."/>
            <person name="Chivian D."/>
            <person name="Pinel N."/>
            <person name="Gabster J.A."/>
            <person name="Dehal P.S."/>
            <person name="He Z."/>
            <person name="Yang Z.K."/>
            <person name="Yen H.C."/>
            <person name="Zhou J."/>
            <person name="Wall J.D."/>
            <person name="Hazen T.C."/>
            <person name="Arkin A.P."/>
            <person name="Stahl D.A."/>
        </authorList>
    </citation>
    <scope>NUCLEOTIDE SEQUENCE [LARGE SCALE GENOMIC DNA]</scope>
    <source>
        <strain>DP4</strain>
    </source>
</reference>
<sequence length="72" mass="8329">MAKEDAIEVDGVVQEALPNAMFRVELQNGHEVLAHISGKMRKFYIRILPGDRVKVELSPYDLKRGRITYRMK</sequence>
<protein>
    <recommendedName>
        <fullName evidence="1">Translation initiation factor IF-1 2</fullName>
    </recommendedName>
</protein>
<name>IF12_NITV4</name>